<gene>
    <name evidence="1" type="primary">rps6e</name>
    <name type="ordered locus">Pisl_1589</name>
</gene>
<keyword id="KW-0687">Ribonucleoprotein</keyword>
<keyword id="KW-0689">Ribosomal protein</keyword>
<name>RS6E_PYRIL</name>
<reference key="1">
    <citation type="submission" date="2006-12" db="EMBL/GenBank/DDBJ databases">
        <title>Complete sequence of Pyrobaculum islandicum DSM 4184.</title>
        <authorList>
            <person name="Copeland A."/>
            <person name="Lucas S."/>
            <person name="Lapidus A."/>
            <person name="Barry K."/>
            <person name="Detter J.C."/>
            <person name="Glavina del Rio T."/>
            <person name="Dalin E."/>
            <person name="Tice H."/>
            <person name="Pitluck S."/>
            <person name="Meincke L."/>
            <person name="Brettin T."/>
            <person name="Bruce D."/>
            <person name="Han C."/>
            <person name="Tapia R."/>
            <person name="Gilna P."/>
            <person name="Schmutz J."/>
            <person name="Larimer F."/>
            <person name="Land M."/>
            <person name="Hauser L."/>
            <person name="Kyrpides N."/>
            <person name="Mikhailova N."/>
            <person name="Cozen A.E."/>
            <person name="Fitz-Gibbon S.T."/>
            <person name="House C.H."/>
            <person name="Saltikov C."/>
            <person name="Lowe T."/>
            <person name="Richardson P."/>
        </authorList>
    </citation>
    <scope>NUCLEOTIDE SEQUENCE [LARGE SCALE GENOMIC DNA]</scope>
    <source>
        <strain>DSM 4184 / JCM 9189 / GEO3</strain>
    </source>
</reference>
<dbReference type="EMBL" id="CP000504">
    <property type="protein sequence ID" value="ABL88743.1"/>
    <property type="molecule type" value="Genomic_DNA"/>
</dbReference>
<dbReference type="RefSeq" id="WP_011763318.1">
    <property type="nucleotide sequence ID" value="NC_008701.1"/>
</dbReference>
<dbReference type="SMR" id="A1RUW1"/>
<dbReference type="STRING" id="384616.Pisl_1589"/>
<dbReference type="GeneID" id="4617384"/>
<dbReference type="KEGG" id="pis:Pisl_1589"/>
<dbReference type="eggNOG" id="arCOG01946">
    <property type="taxonomic scope" value="Archaea"/>
</dbReference>
<dbReference type="HOGENOM" id="CLU_109671_1_1_2"/>
<dbReference type="OrthoDB" id="7793at2157"/>
<dbReference type="Proteomes" id="UP000002595">
    <property type="component" value="Chromosome"/>
</dbReference>
<dbReference type="GO" id="GO:1990904">
    <property type="term" value="C:ribonucleoprotein complex"/>
    <property type="evidence" value="ECO:0007669"/>
    <property type="project" value="UniProtKB-KW"/>
</dbReference>
<dbReference type="GO" id="GO:0005840">
    <property type="term" value="C:ribosome"/>
    <property type="evidence" value="ECO:0007669"/>
    <property type="project" value="UniProtKB-KW"/>
</dbReference>
<dbReference type="GO" id="GO:0003735">
    <property type="term" value="F:structural constituent of ribosome"/>
    <property type="evidence" value="ECO:0007669"/>
    <property type="project" value="InterPro"/>
</dbReference>
<dbReference type="GO" id="GO:0006412">
    <property type="term" value="P:translation"/>
    <property type="evidence" value="ECO:0007669"/>
    <property type="project" value="UniProtKB-UniRule"/>
</dbReference>
<dbReference type="HAMAP" id="MF_00512">
    <property type="entry name" value="Ribosomal_eS6"/>
    <property type="match status" value="1"/>
</dbReference>
<dbReference type="InterPro" id="IPR001377">
    <property type="entry name" value="Ribosomal_eS6"/>
</dbReference>
<dbReference type="InterPro" id="IPR020924">
    <property type="entry name" value="Ribosomal_eS6_arc"/>
</dbReference>
<dbReference type="InterPro" id="IPR018282">
    <property type="entry name" value="Ribosomal_eS6_CS"/>
</dbReference>
<dbReference type="NCBIfam" id="NF003293">
    <property type="entry name" value="PRK04290.1-2"/>
    <property type="match status" value="1"/>
</dbReference>
<dbReference type="PANTHER" id="PTHR11502">
    <property type="entry name" value="40S RIBOSOMAL PROTEIN S6"/>
    <property type="match status" value="1"/>
</dbReference>
<dbReference type="Pfam" id="PF01092">
    <property type="entry name" value="Ribosomal_S6e"/>
    <property type="match status" value="1"/>
</dbReference>
<dbReference type="SMART" id="SM01405">
    <property type="entry name" value="Ribosomal_S6e"/>
    <property type="match status" value="1"/>
</dbReference>
<dbReference type="PROSITE" id="PS00578">
    <property type="entry name" value="RIBOSOMAL_S6E"/>
    <property type="match status" value="1"/>
</dbReference>
<accession>A1RUW1</accession>
<feature type="chain" id="PRO_1000050642" description="Small ribosomal subunit protein eS6">
    <location>
        <begin position="1"/>
        <end position="148"/>
    </location>
</feature>
<proteinExistence type="inferred from homology"/>
<organism>
    <name type="scientific">Pyrobaculum islandicum (strain DSM 4184 / JCM 9189 / GEO3)</name>
    <dbReference type="NCBI Taxonomy" id="384616"/>
    <lineage>
        <taxon>Archaea</taxon>
        <taxon>Thermoproteota</taxon>
        <taxon>Thermoprotei</taxon>
        <taxon>Thermoproteales</taxon>
        <taxon>Thermoproteaceae</taxon>
        <taxon>Pyrobaculum</taxon>
    </lineage>
</organism>
<sequence length="148" mass="15895">MPTFKLVLSDPISGKARQFEIKDPLAQRFIGLKIGDELDGSVLKDFLELPKGAKIRITGGSGIEGAPMHPGVPGPVKRYILADGPPGYWPPKRGMRKRKLVRGNTISDSIVQINAVIVYPQGYSGPPAIPLGAKEIEKLTKAKEGTPA</sequence>
<evidence type="ECO:0000255" key="1">
    <source>
        <dbReference type="HAMAP-Rule" id="MF_00512"/>
    </source>
</evidence>
<evidence type="ECO:0000305" key="2"/>
<comment type="similarity">
    <text evidence="1">Belongs to the eukaryotic ribosomal protein eS6 family.</text>
</comment>
<protein>
    <recommendedName>
        <fullName evidence="1">Small ribosomal subunit protein eS6</fullName>
    </recommendedName>
    <alternativeName>
        <fullName evidence="2">30S ribosomal protein S6e</fullName>
    </alternativeName>
</protein>